<sequence>MNGFASLLRRNQFILLVLFLLQIQSLGLDIDSRPTAEVCATHTISPGPKGDDGEKGDPGEEGKHGKVGRMGPKGIKGELGDMGDQGNIGKTGPIGKKGDKGEKGLLGIPGEKGKAGTVCDCGRYRKFVGQLDISIARLKTSMKFVKNVIAGIRETEEKFYYIVQEEKNYRESLTHCRIRGGMLAMPKDEAANTLIADYVAKSGFFRVFIGVNDLEREGQYMFTDNTPLQNYSNWNEGEPSDPYGHEDCVEMLSSGRWNDTECHLTMYFVCEFIKKKK</sequence>
<protein>
    <recommendedName>
        <fullName>Collectin-10</fullName>
    </recommendedName>
    <alternativeName>
        <fullName>Collectin liver protein 1</fullName>
        <shortName>CL-L1</shortName>
    </alternativeName>
    <alternativeName>
        <fullName>Collectin-34</fullName>
        <shortName>CL-34</shortName>
    </alternativeName>
</protein>
<name>COL10_HUMAN</name>
<gene>
    <name type="primary">COLEC10</name>
    <name type="synonym">CLL1</name>
    <name type="ORF">UNQ366/PRO702</name>
</gene>
<evidence type="ECO:0000250" key="1">
    <source>
        <dbReference type="UniProtKB" id="Q8CF98"/>
    </source>
</evidence>
<evidence type="ECO:0000255" key="2"/>
<evidence type="ECO:0000255" key="3">
    <source>
        <dbReference type="PROSITE-ProRule" id="PRU00040"/>
    </source>
</evidence>
<evidence type="ECO:0000256" key="4">
    <source>
        <dbReference type="SAM" id="MobiDB-lite"/>
    </source>
</evidence>
<evidence type="ECO:0000269" key="5">
    <source>
    </source>
</evidence>
<evidence type="ECO:0000269" key="6">
    <source>
    </source>
</evidence>
<evidence type="ECO:0000305" key="7"/>
<proteinExistence type="evidence at protein level"/>
<keyword id="KW-0106">Calcium</keyword>
<keyword id="KW-0176">Collagen</keyword>
<keyword id="KW-0963">Cytoplasm</keyword>
<keyword id="KW-0225">Disease variant</keyword>
<keyword id="KW-1015">Disulfide bond</keyword>
<keyword id="KW-0325">Glycoprotein</keyword>
<keyword id="KW-0333">Golgi apparatus</keyword>
<keyword id="KW-0430">Lectin</keyword>
<keyword id="KW-0465">Mannose-binding</keyword>
<keyword id="KW-1267">Proteomics identification</keyword>
<keyword id="KW-1185">Reference proteome</keyword>
<keyword id="KW-0964">Secreted</keyword>
<keyword id="KW-0732">Signal</keyword>
<dbReference type="EMBL" id="AB002631">
    <property type="protein sequence ID" value="BAA81747.1"/>
    <property type="molecule type" value="mRNA"/>
</dbReference>
<dbReference type="EMBL" id="AY359038">
    <property type="protein sequence ID" value="AAQ89397.1"/>
    <property type="molecule type" value="mRNA"/>
</dbReference>
<dbReference type="EMBL" id="AK291791">
    <property type="protein sequence ID" value="BAF84480.1"/>
    <property type="molecule type" value="mRNA"/>
</dbReference>
<dbReference type="EMBL" id="CH471060">
    <property type="protein sequence ID" value="EAW91979.1"/>
    <property type="molecule type" value="Genomic_DNA"/>
</dbReference>
<dbReference type="EMBL" id="BC103815">
    <property type="protein sequence ID" value="AAI03816.1"/>
    <property type="molecule type" value="mRNA"/>
</dbReference>
<dbReference type="EMBL" id="BC103816">
    <property type="protein sequence ID" value="AAI03817.1"/>
    <property type="molecule type" value="mRNA"/>
</dbReference>
<dbReference type="CCDS" id="CCDS6327.1"/>
<dbReference type="RefSeq" id="NP_001311024.1">
    <property type="nucleotide sequence ID" value="NM_001324095.1"/>
</dbReference>
<dbReference type="RefSeq" id="NP_006429.2">
    <property type="nucleotide sequence ID" value="NM_006438.5"/>
</dbReference>
<dbReference type="SMR" id="Q9Y6Z7"/>
<dbReference type="BioGRID" id="115833">
    <property type="interactions" value="71"/>
</dbReference>
<dbReference type="ComplexPortal" id="CPX-6181">
    <property type="entry name" value="CL-LK-MASP1 lectin-protease complex"/>
</dbReference>
<dbReference type="ComplexPortal" id="CPX-6240">
    <property type="entry name" value="CL-LK-MASP2 lectin-protease complex"/>
</dbReference>
<dbReference type="FunCoup" id="Q9Y6Z7">
    <property type="interactions" value="23"/>
</dbReference>
<dbReference type="IntAct" id="Q9Y6Z7">
    <property type="interactions" value="18"/>
</dbReference>
<dbReference type="MINT" id="Q9Y6Z7"/>
<dbReference type="STRING" id="9606.ENSP00000332723"/>
<dbReference type="GlyCosmos" id="Q9Y6Z7">
    <property type="glycosylation" value="2 sites, 1 glycan"/>
</dbReference>
<dbReference type="GlyGen" id="Q9Y6Z7">
    <property type="glycosylation" value="2 sites, 1 O-linked glycan (1 site)"/>
</dbReference>
<dbReference type="iPTMnet" id="Q9Y6Z7"/>
<dbReference type="PhosphoSitePlus" id="Q9Y6Z7"/>
<dbReference type="BioMuta" id="COLEC10"/>
<dbReference type="DMDM" id="166218411"/>
<dbReference type="MassIVE" id="Q9Y6Z7"/>
<dbReference type="PaxDb" id="9606-ENSP00000332723"/>
<dbReference type="PeptideAtlas" id="Q9Y6Z7"/>
<dbReference type="ProteomicsDB" id="86836"/>
<dbReference type="Antibodypedia" id="13640">
    <property type="antibodies" value="130 antibodies from 15 providers"/>
</dbReference>
<dbReference type="DNASU" id="10584"/>
<dbReference type="Ensembl" id="ENST00000332843.3">
    <property type="protein sequence ID" value="ENSP00000332723.2"/>
    <property type="gene ID" value="ENSG00000184374.3"/>
</dbReference>
<dbReference type="GeneID" id="10584"/>
<dbReference type="KEGG" id="hsa:10584"/>
<dbReference type="MANE-Select" id="ENST00000332843.3">
    <property type="protein sequence ID" value="ENSP00000332723.2"/>
    <property type="RefSeq nucleotide sequence ID" value="NM_006438.5"/>
    <property type="RefSeq protein sequence ID" value="NP_006429.2"/>
</dbReference>
<dbReference type="UCSC" id="uc003yoo.4">
    <property type="organism name" value="human"/>
</dbReference>
<dbReference type="AGR" id="HGNC:2220"/>
<dbReference type="CTD" id="10584"/>
<dbReference type="DisGeNET" id="10584"/>
<dbReference type="GeneCards" id="COLEC10"/>
<dbReference type="HGNC" id="HGNC:2220">
    <property type="gene designation" value="COLEC10"/>
</dbReference>
<dbReference type="HPA" id="ENSG00000184374">
    <property type="expression patterns" value="Tissue enriched (liver)"/>
</dbReference>
<dbReference type="MalaCards" id="COLEC10"/>
<dbReference type="MIM" id="248340">
    <property type="type" value="phenotype"/>
</dbReference>
<dbReference type="MIM" id="607620">
    <property type="type" value="gene"/>
</dbReference>
<dbReference type="neXtProt" id="NX_Q9Y6Z7"/>
<dbReference type="OpenTargets" id="ENSG00000184374"/>
<dbReference type="Orphanet" id="293843">
    <property type="disease" value="3MC syndrome"/>
</dbReference>
<dbReference type="PharmGKB" id="PA26736"/>
<dbReference type="VEuPathDB" id="HostDB:ENSG00000184374"/>
<dbReference type="eggNOG" id="KOG4297">
    <property type="taxonomic scope" value="Eukaryota"/>
</dbReference>
<dbReference type="GeneTree" id="ENSGT00940000159374"/>
<dbReference type="HOGENOM" id="CLU_049894_3_2_1"/>
<dbReference type="InParanoid" id="Q9Y6Z7"/>
<dbReference type="OMA" id="FICEFLK"/>
<dbReference type="OrthoDB" id="8066719at2759"/>
<dbReference type="PAN-GO" id="Q9Y6Z7">
    <property type="GO annotations" value="1 GO annotation based on evolutionary models"/>
</dbReference>
<dbReference type="PhylomeDB" id="Q9Y6Z7"/>
<dbReference type="TreeFam" id="TF330481"/>
<dbReference type="PathwayCommons" id="Q9Y6Z7"/>
<dbReference type="Reactome" id="R-HSA-166662">
    <property type="pathway name" value="Lectin pathway of complement activation"/>
</dbReference>
<dbReference type="Reactome" id="R-HSA-166663">
    <property type="pathway name" value="Initial triggering of complement"/>
</dbReference>
<dbReference type="SignaLink" id="Q9Y6Z7"/>
<dbReference type="BioGRID-ORCS" id="10584">
    <property type="hits" value="12 hits in 1141 CRISPR screens"/>
</dbReference>
<dbReference type="ChiTaRS" id="COLEC10">
    <property type="organism name" value="human"/>
</dbReference>
<dbReference type="GenomeRNAi" id="10584"/>
<dbReference type="Pharos" id="Q9Y6Z7">
    <property type="development level" value="Tbio"/>
</dbReference>
<dbReference type="PRO" id="PR:Q9Y6Z7"/>
<dbReference type="Proteomes" id="UP000005640">
    <property type="component" value="Chromosome 8"/>
</dbReference>
<dbReference type="RNAct" id="Q9Y6Z7">
    <property type="molecule type" value="protein"/>
</dbReference>
<dbReference type="Bgee" id="ENSG00000184374">
    <property type="expression patterns" value="Expressed in right lobe of liver and 58 other cell types or tissues"/>
</dbReference>
<dbReference type="ExpressionAtlas" id="Q9Y6Z7">
    <property type="expression patterns" value="baseline and differential"/>
</dbReference>
<dbReference type="GO" id="GO:0005581">
    <property type="term" value="C:collagen trimer"/>
    <property type="evidence" value="ECO:0007669"/>
    <property type="project" value="UniProtKB-KW"/>
</dbReference>
<dbReference type="GO" id="GO:0005737">
    <property type="term" value="C:cytoplasm"/>
    <property type="evidence" value="ECO:0000314"/>
    <property type="project" value="UniProtKB"/>
</dbReference>
<dbReference type="GO" id="GO:0009897">
    <property type="term" value="C:external side of plasma membrane"/>
    <property type="evidence" value="ECO:0000303"/>
    <property type="project" value="ComplexPortal"/>
</dbReference>
<dbReference type="GO" id="GO:0005576">
    <property type="term" value="C:extracellular region"/>
    <property type="evidence" value="ECO:0000304"/>
    <property type="project" value="Reactome"/>
</dbReference>
<dbReference type="GO" id="GO:0005615">
    <property type="term" value="C:extracellular space"/>
    <property type="evidence" value="ECO:0000314"/>
    <property type="project" value="UniProtKB"/>
</dbReference>
<dbReference type="GO" id="GO:0005794">
    <property type="term" value="C:Golgi apparatus"/>
    <property type="evidence" value="ECO:0007669"/>
    <property type="project" value="UniProtKB-SubCell"/>
</dbReference>
<dbReference type="GO" id="GO:1905370">
    <property type="term" value="C:serine-type endopeptidase complex"/>
    <property type="evidence" value="ECO:0000303"/>
    <property type="project" value="ComplexPortal"/>
</dbReference>
<dbReference type="GO" id="GO:0042056">
    <property type="term" value="F:chemoattractant activity"/>
    <property type="evidence" value="ECO:0000314"/>
    <property type="project" value="UniProtKB"/>
</dbReference>
<dbReference type="GO" id="GO:0005537">
    <property type="term" value="F:D-mannose binding"/>
    <property type="evidence" value="ECO:0000304"/>
    <property type="project" value="ProtInc"/>
</dbReference>
<dbReference type="GO" id="GO:0002752">
    <property type="term" value="P:cell surface pattern recognition receptor signaling pathway"/>
    <property type="evidence" value="ECO:0000303"/>
    <property type="project" value="ComplexPortal"/>
</dbReference>
<dbReference type="GO" id="GO:0001867">
    <property type="term" value="P:complement activation, lectin pathway"/>
    <property type="evidence" value="ECO:0000314"/>
    <property type="project" value="ComplexPortal"/>
</dbReference>
<dbReference type="GO" id="GO:1904888">
    <property type="term" value="P:cranial skeletal system development"/>
    <property type="evidence" value="ECO:0000315"/>
    <property type="project" value="UniProtKB"/>
</dbReference>
<dbReference type="GO" id="GO:1903028">
    <property type="term" value="P:positive regulation of opsonization"/>
    <property type="evidence" value="ECO:0000314"/>
    <property type="project" value="ComplexPortal"/>
</dbReference>
<dbReference type="GO" id="GO:0006508">
    <property type="term" value="P:proteolysis"/>
    <property type="evidence" value="ECO:0000314"/>
    <property type="project" value="ComplexPortal"/>
</dbReference>
<dbReference type="CDD" id="cd03591">
    <property type="entry name" value="CLECT_collectin_like"/>
    <property type="match status" value="1"/>
</dbReference>
<dbReference type="FunFam" id="3.10.100.10:FF:000005">
    <property type="entry name" value="collectin-11 isoform X1"/>
    <property type="match status" value="1"/>
</dbReference>
<dbReference type="Gene3D" id="3.10.100.10">
    <property type="entry name" value="Mannose-Binding Protein A, subunit A"/>
    <property type="match status" value="1"/>
</dbReference>
<dbReference type="InterPro" id="IPR001304">
    <property type="entry name" value="C-type_lectin-like"/>
</dbReference>
<dbReference type="InterPro" id="IPR016186">
    <property type="entry name" value="C-type_lectin-like/link_sf"/>
</dbReference>
<dbReference type="InterPro" id="IPR018378">
    <property type="entry name" value="C-type_lectin_CS"/>
</dbReference>
<dbReference type="InterPro" id="IPR051663">
    <property type="entry name" value="CLec_Tetranectin-domain"/>
</dbReference>
<dbReference type="InterPro" id="IPR008160">
    <property type="entry name" value="Collagen"/>
</dbReference>
<dbReference type="InterPro" id="IPR033990">
    <property type="entry name" value="Collectin_CTLD"/>
</dbReference>
<dbReference type="InterPro" id="IPR016187">
    <property type="entry name" value="CTDL_fold"/>
</dbReference>
<dbReference type="PANTHER" id="PTHR22799:SF1">
    <property type="entry name" value="C-TYPE LECTIN DOMAIN FAMILY 11 MEMBER A"/>
    <property type="match status" value="1"/>
</dbReference>
<dbReference type="PANTHER" id="PTHR22799">
    <property type="entry name" value="TETRANECTIN-RELATED"/>
    <property type="match status" value="1"/>
</dbReference>
<dbReference type="Pfam" id="PF01391">
    <property type="entry name" value="Collagen"/>
    <property type="match status" value="2"/>
</dbReference>
<dbReference type="Pfam" id="PF00059">
    <property type="entry name" value="Lectin_C"/>
    <property type="match status" value="1"/>
</dbReference>
<dbReference type="SMART" id="SM00034">
    <property type="entry name" value="CLECT"/>
    <property type="match status" value="1"/>
</dbReference>
<dbReference type="SUPFAM" id="SSF56436">
    <property type="entry name" value="C-type lectin-like"/>
    <property type="match status" value="1"/>
</dbReference>
<dbReference type="PROSITE" id="PS00615">
    <property type="entry name" value="C_TYPE_LECTIN_1"/>
    <property type="match status" value="1"/>
</dbReference>
<dbReference type="PROSITE" id="PS50041">
    <property type="entry name" value="C_TYPE_LECTIN_2"/>
    <property type="match status" value="1"/>
</dbReference>
<organism>
    <name type="scientific">Homo sapiens</name>
    <name type="common">Human</name>
    <dbReference type="NCBI Taxonomy" id="9606"/>
    <lineage>
        <taxon>Eukaryota</taxon>
        <taxon>Metazoa</taxon>
        <taxon>Chordata</taxon>
        <taxon>Craniata</taxon>
        <taxon>Vertebrata</taxon>
        <taxon>Euteleostomi</taxon>
        <taxon>Mammalia</taxon>
        <taxon>Eutheria</taxon>
        <taxon>Euarchontoglires</taxon>
        <taxon>Primates</taxon>
        <taxon>Haplorrhini</taxon>
        <taxon>Catarrhini</taxon>
        <taxon>Hominidae</taxon>
        <taxon>Homo</taxon>
    </lineage>
</organism>
<accession>Q9Y6Z7</accession>
<accession>Q3SYH6</accession>
<accession>Q6UW19</accession>
<feature type="signal peptide" evidence="2">
    <location>
        <begin position="1"/>
        <end position="27"/>
    </location>
</feature>
<feature type="chain" id="PRO_0000314233" description="Collectin-10">
    <location>
        <begin position="28"/>
        <end position="277"/>
    </location>
</feature>
<feature type="domain" description="Collagen-like">
    <location>
        <begin position="53"/>
        <end position="112"/>
    </location>
</feature>
<feature type="domain" description="C-type lectin" evidence="3">
    <location>
        <begin position="155"/>
        <end position="271"/>
    </location>
</feature>
<feature type="region of interest" description="Disordered" evidence="4">
    <location>
        <begin position="40"/>
        <end position="107"/>
    </location>
</feature>
<feature type="compositionally biased region" description="Basic and acidic residues" evidence="4">
    <location>
        <begin position="49"/>
        <end position="64"/>
    </location>
</feature>
<feature type="glycosylation site" description="N-linked (GlcNAc...) asparagine" evidence="2">
    <location>
        <position position="258"/>
    </location>
</feature>
<feature type="disulfide bond" evidence="3">
    <location>
        <begin position="176"/>
        <end position="270"/>
    </location>
</feature>
<feature type="disulfide bond" evidence="3">
    <location>
        <begin position="248"/>
        <end position="262"/>
    </location>
</feature>
<feature type="sequence variant" id="VAR_078811" description="In 3MC3; results in lack of protein." evidence="6">
    <location>
        <begin position="9"/>
        <end position="277"/>
    </location>
</feature>
<feature type="sequence variant" id="VAR_078812" description="In 3MC3; severely decreased secretion; dbSNP:rs773764995." evidence="6">
    <original>C</original>
    <variation>W</variation>
    <location>
        <position position="176"/>
    </location>
</feature>
<feature type="sequence conflict" description="In Ref. 1; BAA81747." evidence="7" ref="1">
    <original>Q</original>
    <variation>R</variation>
    <location>
        <position position="85"/>
    </location>
</feature>
<feature type="sequence conflict" description="In Ref. 2; AAQ89397." evidence="7" ref="2">
    <original>F</original>
    <variation>S</variation>
    <location>
        <position position="222"/>
    </location>
</feature>
<comment type="function">
    <text evidence="5 6">Lectin that binds to various sugars: galactose &gt; mannose = fucose &gt; N-acetylglucosamine &gt; N-acetylgalactosamine (PubMed:10224141). Acts as a chemoattractant, probably involved in the regulation of cell migration (PubMed:28301481).</text>
</comment>
<comment type="interaction">
    <interactant intactId="EBI-21859492">
        <id>Q9Y6Z7</id>
    </interactant>
    <interactant intactId="EBI-25809731">
        <id>Q9BWP8</id>
        <label>COLEC11</label>
    </interactant>
    <organismsDiffer>false</organismsDiffer>
    <experiments>3</experiments>
</comment>
<comment type="subcellular location">
    <subcellularLocation>
        <location evidence="6">Secreted</location>
    </subcellularLocation>
    <subcellularLocation>
        <location evidence="1">Golgi apparatus</location>
    </subcellularLocation>
    <subcellularLocation>
        <location evidence="5">Cytoplasm</location>
    </subcellularLocation>
</comment>
<comment type="tissue specificity">
    <text evidence="5">Highly expressed in liver, placenta and adrenal gland. Moderately expressed in small intestine, lung, stomach and prostate. Weakly expressed in trachea and spleen.</text>
</comment>
<comment type="disease" evidence="6">
    <disease id="DI-04982">
        <name>3MC syndrome 3</name>
        <acronym>3MC3</acronym>
        <description>A form of 3MC syndrome, an autosomal recessive disorder characterized by facial dysmorphism, craniosynostosis, learning disability, and genital, limb and vesicorenal anomalies. Facial features include hypertelorism, blepharophimosis, blepharoptosis and highly arched eyebrows, cleft lip and/or palate. The term 3MC syndrome includes Carnevale, Mingarelli, Malpuech, and Michels syndromes.</description>
        <dbReference type="MIM" id="248340"/>
    </disease>
    <text>The disease is caused by variants affecting the gene represented in this entry.</text>
</comment>
<comment type="similarity">
    <text evidence="7">Belongs to the COLEC10/COLEC11 family.</text>
</comment>
<comment type="online information" name="Functional Glycomics Gateway - Glycan Binding">
    <link uri="http://www.functionalglycomics.org/glycomics/GBPServlet?&amp;operationType=view&amp;cbpId=cbp_hum_Ctlect_226"/>
    <text>Collectin L1</text>
</comment>
<reference key="1">
    <citation type="journal article" date="1999" name="J. Biol. Chem.">
        <title>Molecular cloning of a novel human collectin from liver (CL-L1).</title>
        <authorList>
            <person name="Ohtani K."/>
            <person name="Suzuki Y."/>
            <person name="Eda S."/>
            <person name="Kawai T."/>
            <person name="Kase T."/>
            <person name="Yamazaki H."/>
            <person name="Shimada T."/>
            <person name="Keshi H."/>
            <person name="Sakai Y."/>
            <person name="Fukuoh A."/>
            <person name="Sakamoto T."/>
            <person name="Wakamiya N."/>
        </authorList>
    </citation>
    <scope>NUCLEOTIDE SEQUENCE [MRNA]</scope>
    <scope>FUNCTION</scope>
    <scope>SUBCELLULAR LOCATION</scope>
    <scope>TISSUE SPECIFICITY</scope>
</reference>
<reference key="2">
    <citation type="journal article" date="2003" name="Genome Res.">
        <title>The secreted protein discovery initiative (SPDI), a large-scale effort to identify novel human secreted and transmembrane proteins: a bioinformatics assessment.</title>
        <authorList>
            <person name="Clark H.F."/>
            <person name="Gurney A.L."/>
            <person name="Abaya E."/>
            <person name="Baker K."/>
            <person name="Baldwin D.T."/>
            <person name="Brush J."/>
            <person name="Chen J."/>
            <person name="Chow B."/>
            <person name="Chui C."/>
            <person name="Crowley C."/>
            <person name="Currell B."/>
            <person name="Deuel B."/>
            <person name="Dowd P."/>
            <person name="Eaton D."/>
            <person name="Foster J.S."/>
            <person name="Grimaldi C."/>
            <person name="Gu Q."/>
            <person name="Hass P.E."/>
            <person name="Heldens S."/>
            <person name="Huang A."/>
            <person name="Kim H.S."/>
            <person name="Klimowski L."/>
            <person name="Jin Y."/>
            <person name="Johnson S."/>
            <person name="Lee J."/>
            <person name="Lewis L."/>
            <person name="Liao D."/>
            <person name="Mark M.R."/>
            <person name="Robbie E."/>
            <person name="Sanchez C."/>
            <person name="Schoenfeld J."/>
            <person name="Seshagiri S."/>
            <person name="Simmons L."/>
            <person name="Singh J."/>
            <person name="Smith V."/>
            <person name="Stinson J."/>
            <person name="Vagts A."/>
            <person name="Vandlen R.L."/>
            <person name="Watanabe C."/>
            <person name="Wieand D."/>
            <person name="Woods K."/>
            <person name="Xie M.-H."/>
            <person name="Yansura D.G."/>
            <person name="Yi S."/>
            <person name="Yu G."/>
            <person name="Yuan J."/>
            <person name="Zhang M."/>
            <person name="Zhang Z."/>
            <person name="Goddard A.D."/>
            <person name="Wood W.I."/>
            <person name="Godowski P.J."/>
            <person name="Gray A.M."/>
        </authorList>
    </citation>
    <scope>NUCLEOTIDE SEQUENCE [LARGE SCALE MRNA]</scope>
</reference>
<reference key="3">
    <citation type="journal article" date="2004" name="Nat. Genet.">
        <title>Complete sequencing and characterization of 21,243 full-length human cDNAs.</title>
        <authorList>
            <person name="Ota T."/>
            <person name="Suzuki Y."/>
            <person name="Nishikawa T."/>
            <person name="Otsuki T."/>
            <person name="Sugiyama T."/>
            <person name="Irie R."/>
            <person name="Wakamatsu A."/>
            <person name="Hayashi K."/>
            <person name="Sato H."/>
            <person name="Nagai K."/>
            <person name="Kimura K."/>
            <person name="Makita H."/>
            <person name="Sekine M."/>
            <person name="Obayashi M."/>
            <person name="Nishi T."/>
            <person name="Shibahara T."/>
            <person name="Tanaka T."/>
            <person name="Ishii S."/>
            <person name="Yamamoto J."/>
            <person name="Saito K."/>
            <person name="Kawai Y."/>
            <person name="Isono Y."/>
            <person name="Nakamura Y."/>
            <person name="Nagahari K."/>
            <person name="Murakami K."/>
            <person name="Yasuda T."/>
            <person name="Iwayanagi T."/>
            <person name="Wagatsuma M."/>
            <person name="Shiratori A."/>
            <person name="Sudo H."/>
            <person name="Hosoiri T."/>
            <person name="Kaku Y."/>
            <person name="Kodaira H."/>
            <person name="Kondo H."/>
            <person name="Sugawara M."/>
            <person name="Takahashi M."/>
            <person name="Kanda K."/>
            <person name="Yokoi T."/>
            <person name="Furuya T."/>
            <person name="Kikkawa E."/>
            <person name="Omura Y."/>
            <person name="Abe K."/>
            <person name="Kamihara K."/>
            <person name="Katsuta N."/>
            <person name="Sato K."/>
            <person name="Tanikawa M."/>
            <person name="Yamazaki M."/>
            <person name="Ninomiya K."/>
            <person name="Ishibashi T."/>
            <person name="Yamashita H."/>
            <person name="Murakawa K."/>
            <person name="Fujimori K."/>
            <person name="Tanai H."/>
            <person name="Kimata M."/>
            <person name="Watanabe M."/>
            <person name="Hiraoka S."/>
            <person name="Chiba Y."/>
            <person name="Ishida S."/>
            <person name="Ono Y."/>
            <person name="Takiguchi S."/>
            <person name="Watanabe S."/>
            <person name="Yosida M."/>
            <person name="Hotuta T."/>
            <person name="Kusano J."/>
            <person name="Kanehori K."/>
            <person name="Takahashi-Fujii A."/>
            <person name="Hara H."/>
            <person name="Tanase T.-O."/>
            <person name="Nomura Y."/>
            <person name="Togiya S."/>
            <person name="Komai F."/>
            <person name="Hara R."/>
            <person name="Takeuchi K."/>
            <person name="Arita M."/>
            <person name="Imose N."/>
            <person name="Musashino K."/>
            <person name="Yuuki H."/>
            <person name="Oshima A."/>
            <person name="Sasaki N."/>
            <person name="Aotsuka S."/>
            <person name="Yoshikawa Y."/>
            <person name="Matsunawa H."/>
            <person name="Ichihara T."/>
            <person name="Shiohata N."/>
            <person name="Sano S."/>
            <person name="Moriya S."/>
            <person name="Momiyama H."/>
            <person name="Satoh N."/>
            <person name="Takami S."/>
            <person name="Terashima Y."/>
            <person name="Suzuki O."/>
            <person name="Nakagawa S."/>
            <person name="Senoh A."/>
            <person name="Mizoguchi H."/>
            <person name="Goto Y."/>
            <person name="Shimizu F."/>
            <person name="Wakebe H."/>
            <person name="Hishigaki H."/>
            <person name="Watanabe T."/>
            <person name="Sugiyama A."/>
            <person name="Takemoto M."/>
            <person name="Kawakami B."/>
            <person name="Yamazaki M."/>
            <person name="Watanabe K."/>
            <person name="Kumagai A."/>
            <person name="Itakura S."/>
            <person name="Fukuzumi Y."/>
            <person name="Fujimori Y."/>
            <person name="Komiyama M."/>
            <person name="Tashiro H."/>
            <person name="Tanigami A."/>
            <person name="Fujiwara T."/>
            <person name="Ono T."/>
            <person name="Yamada K."/>
            <person name="Fujii Y."/>
            <person name="Ozaki K."/>
            <person name="Hirao M."/>
            <person name="Ohmori Y."/>
            <person name="Kawabata A."/>
            <person name="Hikiji T."/>
            <person name="Kobatake N."/>
            <person name="Inagaki H."/>
            <person name="Ikema Y."/>
            <person name="Okamoto S."/>
            <person name="Okitani R."/>
            <person name="Kawakami T."/>
            <person name="Noguchi S."/>
            <person name="Itoh T."/>
            <person name="Shigeta K."/>
            <person name="Senba T."/>
            <person name="Matsumura K."/>
            <person name="Nakajima Y."/>
            <person name="Mizuno T."/>
            <person name="Morinaga M."/>
            <person name="Sasaki M."/>
            <person name="Togashi T."/>
            <person name="Oyama M."/>
            <person name="Hata H."/>
            <person name="Watanabe M."/>
            <person name="Komatsu T."/>
            <person name="Mizushima-Sugano J."/>
            <person name="Satoh T."/>
            <person name="Shirai Y."/>
            <person name="Takahashi Y."/>
            <person name="Nakagawa K."/>
            <person name="Okumura K."/>
            <person name="Nagase T."/>
            <person name="Nomura N."/>
            <person name="Kikuchi H."/>
            <person name="Masuho Y."/>
            <person name="Yamashita R."/>
            <person name="Nakai K."/>
            <person name="Yada T."/>
            <person name="Nakamura Y."/>
            <person name="Ohara O."/>
            <person name="Isogai T."/>
            <person name="Sugano S."/>
        </authorList>
    </citation>
    <scope>NUCLEOTIDE SEQUENCE [LARGE SCALE MRNA]</scope>
    <source>
        <tissue>Placenta</tissue>
    </source>
</reference>
<reference key="4">
    <citation type="submission" date="2005-07" db="EMBL/GenBank/DDBJ databases">
        <authorList>
            <person name="Mural R.J."/>
            <person name="Istrail S."/>
            <person name="Sutton G.G."/>
            <person name="Florea L."/>
            <person name="Halpern A.L."/>
            <person name="Mobarry C.M."/>
            <person name="Lippert R."/>
            <person name="Walenz B."/>
            <person name="Shatkay H."/>
            <person name="Dew I."/>
            <person name="Miller J.R."/>
            <person name="Flanigan M.J."/>
            <person name="Edwards N.J."/>
            <person name="Bolanos R."/>
            <person name="Fasulo D."/>
            <person name="Halldorsson B.V."/>
            <person name="Hannenhalli S."/>
            <person name="Turner R."/>
            <person name="Yooseph S."/>
            <person name="Lu F."/>
            <person name="Nusskern D.R."/>
            <person name="Shue B.C."/>
            <person name="Zheng X.H."/>
            <person name="Zhong F."/>
            <person name="Delcher A.L."/>
            <person name="Huson D.H."/>
            <person name="Kravitz S.A."/>
            <person name="Mouchard L."/>
            <person name="Reinert K."/>
            <person name="Remington K.A."/>
            <person name="Clark A.G."/>
            <person name="Waterman M.S."/>
            <person name="Eichler E.E."/>
            <person name="Adams M.D."/>
            <person name="Hunkapiller M.W."/>
            <person name="Myers E.W."/>
            <person name="Venter J.C."/>
        </authorList>
    </citation>
    <scope>NUCLEOTIDE SEQUENCE [LARGE SCALE GENOMIC DNA]</scope>
</reference>
<reference key="5">
    <citation type="journal article" date="2004" name="Genome Res.">
        <title>The status, quality, and expansion of the NIH full-length cDNA project: the Mammalian Gene Collection (MGC).</title>
        <authorList>
            <consortium name="The MGC Project Team"/>
        </authorList>
    </citation>
    <scope>NUCLEOTIDE SEQUENCE [LARGE SCALE MRNA]</scope>
</reference>
<reference key="6">
    <citation type="journal article" date="2017" name="PLoS Genet.">
        <title>COLEC10 is mutated in 3MC patients and regulates early craniofacial development.</title>
        <authorList>
            <person name="Munye M.M."/>
            <person name="Diaz-Font A."/>
            <person name="Ocaka L."/>
            <person name="Henriksen M.L."/>
            <person name="Lees M."/>
            <person name="Brady A."/>
            <person name="Jenkins D."/>
            <person name="Morton J."/>
            <person name="Hansen S.W."/>
            <person name="Bacchelli C."/>
            <person name="Beales P.L."/>
            <person name="Hernandez-Hernandez V."/>
        </authorList>
    </citation>
    <scope>FUNCTION</scope>
    <scope>SUBCELLULAR LOCATION</scope>
    <scope>INVOLVEMENT IN 3MC3</scope>
    <scope>VARIANTS 3MC3 9-ARG--LYS-277 DEL AND TRP-176</scope>
    <scope>CHARACTERIZATION OF VARIANTS 3MC3 9-ARG--LYS-277 DEL AND TRP-176</scope>
</reference>